<reference key="1">
    <citation type="journal article" date="2009" name="Science">
        <title>The dynamics and time scale of ongoing genomic erosion in symbiotic bacteria.</title>
        <authorList>
            <person name="Moran N.A."/>
            <person name="McLaughlin H.J."/>
            <person name="Sorek R."/>
        </authorList>
    </citation>
    <scope>NUCLEOTIDE SEQUENCE [LARGE SCALE GENOMIC DNA]</scope>
    <source>
        <strain>5A</strain>
    </source>
</reference>
<sequence>MGKIIGIDLGTTNSCVAIMDGNKPRVLENAEGDRTTPSIIAYTQEGEVLVGQPAKRQAITNPKNTLFAIKRLIGRKFKDDEVQRDIKIMPYNIVNSDNGDAWIDVKKQKMAPPQISAEVLKKMKKTAEDYLGETIKEAVITVPAYFNDAQRQATKDAGRIAGLEVKRIINEPTAAALAYGLDKGKGNRTIAVYDLGGGTFDISIIEIDEVDKEKTFEVLATNGDTHLGGEDFDSRLINYLVTEFKKEQGIDLRNDPLSMQRLKESAEKAKIELSSAQQTDVNLPYITADSNGPKHLNIKVTRAKLESLVEDLILRSIEPLKVALKDAGLSVTDINDVILVGGQTRMPMVQSKVADFFGKEPRKDVNPDEAVAVGAAVQGGVLSGDVKDVLLLDVTPLSLGIETMGGIMTSLINKNTTIPTKHSQIFSTAEDNQSAVTIHVLQGERKRSSDNKSLGQFNLDGINPAPRGTAQIEVTFDIDSDGILHVSAKDKKTGKEQKITIKASSGLNEEEIKKMVNDAEANSEADQKFEELIQTRNQGDQLVHSIKKQLNENKNSIEEESKKDIQLALNKLENALKGEDKSDIEKNIQNLLKISSKLTEINQKKSEKDQKDNNMSANKKDENVVDAEFEEIKDPKK</sequence>
<evidence type="ECO:0000255" key="1">
    <source>
        <dbReference type="HAMAP-Rule" id="MF_00332"/>
    </source>
</evidence>
<evidence type="ECO:0000256" key="2">
    <source>
        <dbReference type="SAM" id="MobiDB-lite"/>
    </source>
</evidence>
<accession>B8D8V4</accession>
<comment type="function">
    <text evidence="1">Acts as a chaperone.</text>
</comment>
<comment type="induction">
    <text evidence="1">By stress conditions e.g. heat shock.</text>
</comment>
<comment type="similarity">
    <text evidence="1">Belongs to the heat shock protein 70 family.</text>
</comment>
<dbReference type="EMBL" id="CP001161">
    <property type="protein sequence ID" value="ACL30526.1"/>
    <property type="molecule type" value="Genomic_DNA"/>
</dbReference>
<dbReference type="RefSeq" id="WP_009874109.1">
    <property type="nucleotide sequence ID" value="NC_011833.1"/>
</dbReference>
<dbReference type="SMR" id="B8D8V4"/>
<dbReference type="KEGG" id="bap:BUAP5A_151"/>
<dbReference type="HOGENOM" id="CLU_005965_2_1_6"/>
<dbReference type="OrthoDB" id="9766019at2"/>
<dbReference type="Proteomes" id="UP000006904">
    <property type="component" value="Chromosome"/>
</dbReference>
<dbReference type="GO" id="GO:0005524">
    <property type="term" value="F:ATP binding"/>
    <property type="evidence" value="ECO:0007669"/>
    <property type="project" value="UniProtKB-UniRule"/>
</dbReference>
<dbReference type="GO" id="GO:0140662">
    <property type="term" value="F:ATP-dependent protein folding chaperone"/>
    <property type="evidence" value="ECO:0007669"/>
    <property type="project" value="InterPro"/>
</dbReference>
<dbReference type="GO" id="GO:0051082">
    <property type="term" value="F:unfolded protein binding"/>
    <property type="evidence" value="ECO:0007669"/>
    <property type="project" value="InterPro"/>
</dbReference>
<dbReference type="CDD" id="cd10234">
    <property type="entry name" value="ASKHA_NBD_HSP70_DnaK-like"/>
    <property type="match status" value="1"/>
</dbReference>
<dbReference type="FunFam" id="2.60.34.10:FF:000014">
    <property type="entry name" value="Chaperone protein DnaK HSP70"/>
    <property type="match status" value="1"/>
</dbReference>
<dbReference type="FunFam" id="1.20.1270.10:FF:000001">
    <property type="entry name" value="Molecular chaperone DnaK"/>
    <property type="match status" value="1"/>
</dbReference>
<dbReference type="FunFam" id="3.30.420.40:FF:000004">
    <property type="entry name" value="Molecular chaperone DnaK"/>
    <property type="match status" value="1"/>
</dbReference>
<dbReference type="FunFam" id="3.90.640.10:FF:000003">
    <property type="entry name" value="Molecular chaperone DnaK"/>
    <property type="match status" value="1"/>
</dbReference>
<dbReference type="Gene3D" id="1.20.1270.10">
    <property type="match status" value="1"/>
</dbReference>
<dbReference type="Gene3D" id="3.30.420.40">
    <property type="match status" value="2"/>
</dbReference>
<dbReference type="Gene3D" id="3.90.640.10">
    <property type="entry name" value="Actin, Chain A, domain 4"/>
    <property type="match status" value="1"/>
</dbReference>
<dbReference type="Gene3D" id="2.60.34.10">
    <property type="entry name" value="Substrate Binding Domain Of DNAk, Chain A, domain 1"/>
    <property type="match status" value="1"/>
</dbReference>
<dbReference type="HAMAP" id="MF_00332">
    <property type="entry name" value="DnaK"/>
    <property type="match status" value="1"/>
</dbReference>
<dbReference type="InterPro" id="IPR043129">
    <property type="entry name" value="ATPase_NBD"/>
</dbReference>
<dbReference type="InterPro" id="IPR012725">
    <property type="entry name" value="Chaperone_DnaK"/>
</dbReference>
<dbReference type="InterPro" id="IPR018181">
    <property type="entry name" value="Heat_shock_70_CS"/>
</dbReference>
<dbReference type="InterPro" id="IPR029048">
    <property type="entry name" value="HSP70_C_sf"/>
</dbReference>
<dbReference type="InterPro" id="IPR029047">
    <property type="entry name" value="HSP70_peptide-bd_sf"/>
</dbReference>
<dbReference type="InterPro" id="IPR013126">
    <property type="entry name" value="Hsp_70_fam"/>
</dbReference>
<dbReference type="NCBIfam" id="NF001413">
    <property type="entry name" value="PRK00290.1"/>
    <property type="match status" value="1"/>
</dbReference>
<dbReference type="NCBIfam" id="NF003520">
    <property type="entry name" value="PRK05183.1"/>
    <property type="match status" value="1"/>
</dbReference>
<dbReference type="NCBIfam" id="TIGR02350">
    <property type="entry name" value="prok_dnaK"/>
    <property type="match status" value="1"/>
</dbReference>
<dbReference type="PANTHER" id="PTHR19375">
    <property type="entry name" value="HEAT SHOCK PROTEIN 70KDA"/>
    <property type="match status" value="1"/>
</dbReference>
<dbReference type="Pfam" id="PF00012">
    <property type="entry name" value="HSP70"/>
    <property type="match status" value="1"/>
</dbReference>
<dbReference type="PRINTS" id="PR00301">
    <property type="entry name" value="HEATSHOCK70"/>
</dbReference>
<dbReference type="SUPFAM" id="SSF53067">
    <property type="entry name" value="Actin-like ATPase domain"/>
    <property type="match status" value="2"/>
</dbReference>
<dbReference type="SUPFAM" id="SSF100934">
    <property type="entry name" value="Heat shock protein 70kD (HSP70), C-terminal subdomain"/>
    <property type="match status" value="1"/>
</dbReference>
<dbReference type="SUPFAM" id="SSF100920">
    <property type="entry name" value="Heat shock protein 70kD (HSP70), peptide-binding domain"/>
    <property type="match status" value="1"/>
</dbReference>
<dbReference type="PROSITE" id="PS00297">
    <property type="entry name" value="HSP70_1"/>
    <property type="match status" value="1"/>
</dbReference>
<dbReference type="PROSITE" id="PS00329">
    <property type="entry name" value="HSP70_2"/>
    <property type="match status" value="1"/>
</dbReference>
<dbReference type="PROSITE" id="PS01036">
    <property type="entry name" value="HSP70_3"/>
    <property type="match status" value="1"/>
</dbReference>
<proteinExistence type="inferred from homology"/>
<organism>
    <name type="scientific">Buchnera aphidicola subsp. Acyrthosiphon pisum (strain 5A)</name>
    <dbReference type="NCBI Taxonomy" id="563178"/>
    <lineage>
        <taxon>Bacteria</taxon>
        <taxon>Pseudomonadati</taxon>
        <taxon>Pseudomonadota</taxon>
        <taxon>Gammaproteobacteria</taxon>
        <taxon>Enterobacterales</taxon>
        <taxon>Erwiniaceae</taxon>
        <taxon>Buchnera</taxon>
    </lineage>
</organism>
<name>DNAK_BUCA5</name>
<feature type="chain" id="PRO_1000133135" description="Chaperone protein DnaK">
    <location>
        <begin position="1"/>
        <end position="637"/>
    </location>
</feature>
<feature type="region of interest" description="Disordered" evidence="2">
    <location>
        <begin position="599"/>
        <end position="637"/>
    </location>
</feature>
<feature type="compositionally biased region" description="Basic and acidic residues" evidence="2">
    <location>
        <begin position="602"/>
        <end position="623"/>
    </location>
</feature>
<feature type="modified residue" description="Phosphothreonine; by autocatalysis" evidence="1">
    <location>
        <position position="199"/>
    </location>
</feature>
<gene>
    <name evidence="1" type="primary">dnaK</name>
    <name type="ordered locus">BUAP5A_151</name>
</gene>
<keyword id="KW-0067">ATP-binding</keyword>
<keyword id="KW-0143">Chaperone</keyword>
<keyword id="KW-0547">Nucleotide-binding</keyword>
<keyword id="KW-0597">Phosphoprotein</keyword>
<keyword id="KW-0346">Stress response</keyword>
<protein>
    <recommendedName>
        <fullName evidence="1">Chaperone protein DnaK</fullName>
    </recommendedName>
    <alternativeName>
        <fullName evidence="1">HSP70</fullName>
    </alternativeName>
    <alternativeName>
        <fullName evidence="1">Heat shock 70 kDa protein</fullName>
    </alternativeName>
    <alternativeName>
        <fullName evidence="1">Heat shock protein 70</fullName>
    </alternativeName>
</protein>